<sequence length="800" mass="86915">MASTNVTGQCPGPMKATSNGAFQNESPLDFALPLIILQIVLVVVFTRLLAYFLKPLKQPRVIAEIIGGILLGPSALGRSKAYLDTIFPKKSLTVLDTLANIGLLFFLFLVGLELDFAAIKKTGKKSLLIAIAGISLPFIVGVGTSFVLSATISKGVDQLPFIVFMGVALSITAFPVLARILAELKLLTTDIGRMAMSAAGVNDVAAWILLALAIALSGDGTSPLVSVWVLLCGTGFVIFAVVAIKPLLAYMARRCPEGEPVKELYVCVTLTVVLAASFVTDTIGIHALFGAFVVGIVAPKEGPFCRILTEKIEDLVSGLLLPLYFAASGLKTDVTTIRGAQSWGLLVLVILTTCFGKIVGTVGSSMLCKVPFREAVTLGFLMNTKGLVELIVLNIGKDRKVLNDQAFAILVLMALFTTFITTPIVMLIYKPARKGAPYKHRTIQRKDHDSELRILACFHSTRNIPTLINLIESSRGTGKKGRLCVYAMHLMELSERSSAIAMVHKARNNGLPIWNKIERSTDQMVIAFEAYQHLRAVAVRPMTAISGLSSIHEDICTSAHQKRVAMILLPFHKHQRMDGAMESIGHRFHEVNQRVLQRAPCSVGILVDRGLGGTSQVVASEVAYKVVIPFFGGLDDREALAYGMKMVEHPGITLTVYKFVAARGTLKRFEKSEHDEKEKKEKETDEEFVRELMNDPRGNESLAYEERVVESKDDIIATLKSMSKCNLFVVGRNAAVASLVKSTDCPELGPVGRLLSSSEFSTTASVLVVQGYDPAADTRPLVEEDAEYDQSSRDISDLTA</sequence>
<comment type="function">
    <text evidence="1">May operate as a cation/H(+) antiporter.</text>
</comment>
<comment type="subcellular location">
    <subcellularLocation>
        <location evidence="1">Membrane</location>
        <topology evidence="1">Multi-pass membrane protein</topology>
    </subcellularLocation>
</comment>
<comment type="tissue specificity">
    <text evidence="4">Expressed in the whole plant but preferentially in pollen.</text>
</comment>
<comment type="similarity">
    <text evidence="5">Belongs to the monovalent cation:proton antiporter 2 (CPA2) transporter (TC 2.A.37) family. CHX (TC 2.A.37.4) subfamily.</text>
</comment>
<dbReference type="EMBL" id="AY926475">
    <property type="protein sequence ID" value="AAX49547.1"/>
    <property type="molecule type" value="mRNA"/>
</dbReference>
<dbReference type="EMBL" id="AB022219">
    <property type="protein sequence ID" value="BAB02053.1"/>
    <property type="molecule type" value="Genomic_DNA"/>
</dbReference>
<dbReference type="EMBL" id="CP002686">
    <property type="protein sequence ID" value="AEE75983.1"/>
    <property type="molecule type" value="Genomic_DNA"/>
</dbReference>
<dbReference type="EMBL" id="CP002686">
    <property type="protein sequence ID" value="ANM63400.1"/>
    <property type="molecule type" value="Genomic_DNA"/>
</dbReference>
<dbReference type="RefSeq" id="NP_001319577.1">
    <property type="nucleotide sequence ID" value="NM_001338295.1"/>
</dbReference>
<dbReference type="RefSeq" id="NP_188390.2">
    <property type="nucleotide sequence ID" value="NM_112644.3"/>
</dbReference>
<dbReference type="SMR" id="Q9LUN4"/>
<dbReference type="BioGRID" id="6363">
    <property type="interactions" value="9"/>
</dbReference>
<dbReference type="FunCoup" id="Q9LUN4">
    <property type="interactions" value="269"/>
</dbReference>
<dbReference type="IntAct" id="Q9LUN4">
    <property type="interactions" value="6"/>
</dbReference>
<dbReference type="STRING" id="3702.Q9LUN4"/>
<dbReference type="iPTMnet" id="Q9LUN4"/>
<dbReference type="PaxDb" id="3702-AT3G17630.1"/>
<dbReference type="ProteomicsDB" id="246971"/>
<dbReference type="EnsemblPlants" id="AT3G17630.1">
    <property type="protein sequence ID" value="AT3G17630.1"/>
    <property type="gene ID" value="AT3G17630"/>
</dbReference>
<dbReference type="EnsemblPlants" id="AT3G17630.2">
    <property type="protein sequence ID" value="AT3G17630.2"/>
    <property type="gene ID" value="AT3G17630"/>
</dbReference>
<dbReference type="GeneID" id="821030"/>
<dbReference type="Gramene" id="AT3G17630.1">
    <property type="protein sequence ID" value="AT3G17630.1"/>
    <property type="gene ID" value="AT3G17630"/>
</dbReference>
<dbReference type="Gramene" id="AT3G17630.2">
    <property type="protein sequence ID" value="AT3G17630.2"/>
    <property type="gene ID" value="AT3G17630"/>
</dbReference>
<dbReference type="KEGG" id="ath:AT3G17630"/>
<dbReference type="Araport" id="AT3G17630"/>
<dbReference type="TAIR" id="AT3G17630">
    <property type="gene designation" value="CHX19"/>
</dbReference>
<dbReference type="eggNOG" id="KOG1650">
    <property type="taxonomic scope" value="Eukaryota"/>
</dbReference>
<dbReference type="HOGENOM" id="CLU_005126_6_2_1"/>
<dbReference type="InParanoid" id="Q9LUN4"/>
<dbReference type="OMA" id="EYQHINQ"/>
<dbReference type="PhylomeDB" id="Q9LUN4"/>
<dbReference type="PRO" id="PR:Q9LUN4"/>
<dbReference type="Proteomes" id="UP000006548">
    <property type="component" value="Chromosome 3"/>
</dbReference>
<dbReference type="ExpressionAtlas" id="Q9LUN4">
    <property type="expression patterns" value="baseline and differential"/>
</dbReference>
<dbReference type="GO" id="GO:0005770">
    <property type="term" value="C:late endosome"/>
    <property type="evidence" value="ECO:0000314"/>
    <property type="project" value="TAIR"/>
</dbReference>
<dbReference type="GO" id="GO:0016020">
    <property type="term" value="C:membrane"/>
    <property type="evidence" value="ECO:0007669"/>
    <property type="project" value="UniProtKB-SubCell"/>
</dbReference>
<dbReference type="GO" id="GO:0015297">
    <property type="term" value="F:antiporter activity"/>
    <property type="evidence" value="ECO:0007669"/>
    <property type="project" value="UniProtKB-KW"/>
</dbReference>
<dbReference type="GO" id="GO:0006813">
    <property type="term" value="P:potassium ion transport"/>
    <property type="evidence" value="ECO:0007669"/>
    <property type="project" value="UniProtKB-KW"/>
</dbReference>
<dbReference type="GO" id="GO:1902600">
    <property type="term" value="P:proton transmembrane transport"/>
    <property type="evidence" value="ECO:0007669"/>
    <property type="project" value="InterPro"/>
</dbReference>
<dbReference type="GO" id="GO:0006885">
    <property type="term" value="P:regulation of pH"/>
    <property type="evidence" value="ECO:0000315"/>
    <property type="project" value="TAIR"/>
</dbReference>
<dbReference type="FunFam" id="1.20.1530.20:FF:000003">
    <property type="entry name" value="Cation/H(+) antiporter 15"/>
    <property type="match status" value="1"/>
</dbReference>
<dbReference type="Gene3D" id="1.20.1530.20">
    <property type="match status" value="1"/>
</dbReference>
<dbReference type="Gene3D" id="3.40.50.12370">
    <property type="match status" value="1"/>
</dbReference>
<dbReference type="InterPro" id="IPR006153">
    <property type="entry name" value="Cation/H_exchanger_TM"/>
</dbReference>
<dbReference type="InterPro" id="IPR050794">
    <property type="entry name" value="CPA2_transporter"/>
</dbReference>
<dbReference type="InterPro" id="IPR038770">
    <property type="entry name" value="Na+/solute_symporter_sf"/>
</dbReference>
<dbReference type="PANTHER" id="PTHR32468">
    <property type="entry name" value="CATION/H + ANTIPORTER"/>
    <property type="match status" value="1"/>
</dbReference>
<dbReference type="PANTHER" id="PTHR32468:SF81">
    <property type="entry name" value="CATION_H(+) ANTIPORTER 19"/>
    <property type="match status" value="1"/>
</dbReference>
<dbReference type="Pfam" id="PF23256">
    <property type="entry name" value="CHX17_2nd"/>
    <property type="match status" value="1"/>
</dbReference>
<dbReference type="Pfam" id="PF23259">
    <property type="entry name" value="CHX17_C"/>
    <property type="match status" value="1"/>
</dbReference>
<dbReference type="Pfam" id="PF00999">
    <property type="entry name" value="Na_H_Exchanger"/>
    <property type="match status" value="1"/>
</dbReference>
<organism>
    <name type="scientific">Arabidopsis thaliana</name>
    <name type="common">Mouse-ear cress</name>
    <dbReference type="NCBI Taxonomy" id="3702"/>
    <lineage>
        <taxon>Eukaryota</taxon>
        <taxon>Viridiplantae</taxon>
        <taxon>Streptophyta</taxon>
        <taxon>Embryophyta</taxon>
        <taxon>Tracheophyta</taxon>
        <taxon>Spermatophyta</taxon>
        <taxon>Magnoliopsida</taxon>
        <taxon>eudicotyledons</taxon>
        <taxon>Gunneridae</taxon>
        <taxon>Pentapetalae</taxon>
        <taxon>rosids</taxon>
        <taxon>malvids</taxon>
        <taxon>Brassicales</taxon>
        <taxon>Brassicaceae</taxon>
        <taxon>Camelineae</taxon>
        <taxon>Arabidopsis</taxon>
    </lineage>
</organism>
<gene>
    <name type="primary">CHX19</name>
    <name type="ordered locus">At3g17630</name>
    <name type="ORF">MKP6.1</name>
</gene>
<protein>
    <recommendedName>
        <fullName>Cation/H(+) antiporter 19</fullName>
    </recommendedName>
    <alternativeName>
        <fullName>Protein CATION/H+ EXCHANGER 19</fullName>
        <shortName>AtCHX19</shortName>
    </alternativeName>
</protein>
<reference key="1">
    <citation type="journal article" date="2004" name="Plant Physiol.">
        <title>Expression patterns of a novel AtCHX gene family highlight potential roles in osmotic adjustment and K+ homeostasis in pollen development.</title>
        <authorList>
            <person name="Sze H."/>
            <person name="Padmanaban S."/>
            <person name="Cellier F."/>
            <person name="Honys D."/>
            <person name="Cheng N.-H."/>
            <person name="Bock K.W."/>
            <person name="Conejero G."/>
            <person name="Li X."/>
            <person name="Twell D."/>
            <person name="Ward J.M."/>
            <person name="Hirschi K.D."/>
        </authorList>
    </citation>
    <scope>NUCLEOTIDE SEQUENCE [MRNA]</scope>
    <scope>TISSUE SPECIFICITY</scope>
    <scope>GENE FAMILY</scope>
    <scope>NOMENCLATURE</scope>
    <source>
        <tissue>Pollen</tissue>
    </source>
</reference>
<reference key="2">
    <citation type="journal article" date="2000" name="DNA Res.">
        <title>Structural analysis of Arabidopsis thaliana chromosome 3. I. Sequence features of the regions of 4,504,864 bp covered by sixty P1 and TAC clones.</title>
        <authorList>
            <person name="Sato S."/>
            <person name="Nakamura Y."/>
            <person name="Kaneko T."/>
            <person name="Katoh T."/>
            <person name="Asamizu E."/>
            <person name="Tabata S."/>
        </authorList>
    </citation>
    <scope>NUCLEOTIDE SEQUENCE [LARGE SCALE GENOMIC DNA]</scope>
    <source>
        <strain>cv. Columbia</strain>
    </source>
</reference>
<reference key="3">
    <citation type="journal article" date="2017" name="Plant J.">
        <title>Araport11: a complete reannotation of the Arabidopsis thaliana reference genome.</title>
        <authorList>
            <person name="Cheng C.Y."/>
            <person name="Krishnakumar V."/>
            <person name="Chan A.P."/>
            <person name="Thibaud-Nissen F."/>
            <person name="Schobel S."/>
            <person name="Town C.D."/>
        </authorList>
    </citation>
    <scope>GENOME REANNOTATION</scope>
    <source>
        <strain>cv. Columbia</strain>
    </source>
</reference>
<reference key="4">
    <citation type="journal article" date="2001" name="Plant Physiol.">
        <title>Phylogenetic relationships within cation transporter families of Arabidopsis.</title>
        <authorList>
            <person name="Maeser P."/>
            <person name="Thomine S."/>
            <person name="Schroeder J.I."/>
            <person name="Ward J.M."/>
            <person name="Hirschi K."/>
            <person name="Sze H."/>
            <person name="Talke I.N."/>
            <person name="Amtmann A."/>
            <person name="Maathuis F.J.M."/>
            <person name="Sanders D."/>
            <person name="Harper J.F."/>
            <person name="Tchieu J."/>
            <person name="Gribskov M."/>
            <person name="Persans M.W."/>
            <person name="Salt D.E."/>
            <person name="Kim S.A."/>
            <person name="Guerinot M.L."/>
        </authorList>
    </citation>
    <scope>GENE FAMILY</scope>
    <scope>NOMENCLATURE</scope>
</reference>
<feature type="chain" id="PRO_0000394989" description="Cation/H(+) antiporter 19">
    <location>
        <begin position="1"/>
        <end position="800"/>
    </location>
</feature>
<feature type="transmembrane region" description="Helical" evidence="2">
    <location>
        <begin position="30"/>
        <end position="50"/>
    </location>
</feature>
<feature type="transmembrane region" description="Helical" evidence="2">
    <location>
        <begin position="60"/>
        <end position="77"/>
    </location>
</feature>
<feature type="transmembrane region" description="Helical" evidence="2">
    <location>
        <begin position="92"/>
        <end position="112"/>
    </location>
</feature>
<feature type="transmembrane region" description="Helical" evidence="2">
    <location>
        <begin position="127"/>
        <end position="147"/>
    </location>
</feature>
<feature type="transmembrane region" description="Helical" evidence="2">
    <location>
        <begin position="158"/>
        <end position="178"/>
    </location>
</feature>
<feature type="transmembrane region" description="Helical" evidence="2">
    <location>
        <begin position="196"/>
        <end position="216"/>
    </location>
</feature>
<feature type="transmembrane region" description="Helical" evidence="2">
    <location>
        <begin position="224"/>
        <end position="244"/>
    </location>
</feature>
<feature type="transmembrane region" description="Helical" evidence="2">
    <location>
        <begin position="278"/>
        <end position="298"/>
    </location>
</feature>
<feature type="transmembrane region" description="Helical" evidence="2">
    <location>
        <begin position="315"/>
        <end position="335"/>
    </location>
</feature>
<feature type="transmembrane region" description="Helical" evidence="2">
    <location>
        <begin position="343"/>
        <end position="363"/>
    </location>
</feature>
<feature type="transmembrane region" description="Helical" evidence="2">
    <location>
        <begin position="375"/>
        <end position="395"/>
    </location>
</feature>
<feature type="transmembrane region" description="Helical" evidence="2">
    <location>
        <begin position="408"/>
        <end position="428"/>
    </location>
</feature>
<feature type="region of interest" description="Disordered" evidence="3">
    <location>
        <begin position="776"/>
        <end position="800"/>
    </location>
</feature>
<feature type="compositionally biased region" description="Basic and acidic residues" evidence="3">
    <location>
        <begin position="790"/>
        <end position="800"/>
    </location>
</feature>
<proteinExistence type="evidence at transcript level"/>
<keyword id="KW-0050">Antiport</keyword>
<keyword id="KW-0406">Ion transport</keyword>
<keyword id="KW-0472">Membrane</keyword>
<keyword id="KW-0630">Potassium</keyword>
<keyword id="KW-0633">Potassium transport</keyword>
<keyword id="KW-1185">Reference proteome</keyword>
<keyword id="KW-0812">Transmembrane</keyword>
<keyword id="KW-1133">Transmembrane helix</keyword>
<keyword id="KW-0813">Transport</keyword>
<accession>Q9LUN4</accession>
<name>CHX19_ARATH</name>
<evidence type="ECO:0000250" key="1"/>
<evidence type="ECO:0000255" key="2"/>
<evidence type="ECO:0000256" key="3">
    <source>
        <dbReference type="SAM" id="MobiDB-lite"/>
    </source>
</evidence>
<evidence type="ECO:0000269" key="4">
    <source>
    </source>
</evidence>
<evidence type="ECO:0000305" key="5"/>